<feature type="chain" id="PRO_0000236991" description="Chaperone protein HtpG">
    <location>
        <begin position="1"/>
        <end position="636"/>
    </location>
</feature>
<feature type="region of interest" description="A; substrate-binding" evidence="1">
    <location>
        <begin position="1"/>
        <end position="329"/>
    </location>
</feature>
<feature type="region of interest" description="B" evidence="1">
    <location>
        <begin position="330"/>
        <end position="550"/>
    </location>
</feature>
<feature type="region of interest" description="C" evidence="1">
    <location>
        <begin position="551"/>
        <end position="636"/>
    </location>
</feature>
<comment type="function">
    <text evidence="1">Molecular chaperone. Has ATPase activity.</text>
</comment>
<comment type="subunit">
    <text evidence="1">Homodimer.</text>
</comment>
<comment type="subcellular location">
    <subcellularLocation>
        <location evidence="1">Cytoplasm</location>
    </subcellularLocation>
</comment>
<comment type="similarity">
    <text evidence="1">Belongs to the heat shock protein 90 family.</text>
</comment>
<dbReference type="EMBL" id="CP000112">
    <property type="protein sequence ID" value="ABB37948.1"/>
    <property type="molecule type" value="Genomic_DNA"/>
</dbReference>
<dbReference type="RefSeq" id="WP_011367169.1">
    <property type="nucleotide sequence ID" value="NC_007519.1"/>
</dbReference>
<dbReference type="SMR" id="Q313E8"/>
<dbReference type="STRING" id="207559.Dde_1147"/>
<dbReference type="KEGG" id="dde:Dde_1147"/>
<dbReference type="eggNOG" id="COG0326">
    <property type="taxonomic scope" value="Bacteria"/>
</dbReference>
<dbReference type="HOGENOM" id="CLU_006684_3_0_7"/>
<dbReference type="Proteomes" id="UP000002710">
    <property type="component" value="Chromosome"/>
</dbReference>
<dbReference type="GO" id="GO:0005737">
    <property type="term" value="C:cytoplasm"/>
    <property type="evidence" value="ECO:0007669"/>
    <property type="project" value="UniProtKB-SubCell"/>
</dbReference>
<dbReference type="GO" id="GO:0005524">
    <property type="term" value="F:ATP binding"/>
    <property type="evidence" value="ECO:0007669"/>
    <property type="project" value="UniProtKB-UniRule"/>
</dbReference>
<dbReference type="GO" id="GO:0016887">
    <property type="term" value="F:ATP hydrolysis activity"/>
    <property type="evidence" value="ECO:0007669"/>
    <property type="project" value="InterPro"/>
</dbReference>
<dbReference type="GO" id="GO:0140662">
    <property type="term" value="F:ATP-dependent protein folding chaperone"/>
    <property type="evidence" value="ECO:0007669"/>
    <property type="project" value="InterPro"/>
</dbReference>
<dbReference type="GO" id="GO:0051082">
    <property type="term" value="F:unfolded protein binding"/>
    <property type="evidence" value="ECO:0007669"/>
    <property type="project" value="UniProtKB-UniRule"/>
</dbReference>
<dbReference type="CDD" id="cd16927">
    <property type="entry name" value="HATPase_Hsp90-like"/>
    <property type="match status" value="1"/>
</dbReference>
<dbReference type="FunFam" id="3.30.565.10:FF:000009">
    <property type="entry name" value="Molecular chaperone HtpG"/>
    <property type="match status" value="1"/>
</dbReference>
<dbReference type="Gene3D" id="3.30.230.80">
    <property type="match status" value="1"/>
</dbReference>
<dbReference type="Gene3D" id="3.40.50.11260">
    <property type="match status" value="1"/>
</dbReference>
<dbReference type="Gene3D" id="1.20.120.790">
    <property type="entry name" value="Heat shock protein 90, C-terminal domain"/>
    <property type="match status" value="1"/>
</dbReference>
<dbReference type="Gene3D" id="3.30.565.10">
    <property type="entry name" value="Histidine kinase-like ATPase, C-terminal domain"/>
    <property type="match status" value="1"/>
</dbReference>
<dbReference type="HAMAP" id="MF_00505">
    <property type="entry name" value="HSP90"/>
    <property type="match status" value="1"/>
</dbReference>
<dbReference type="InterPro" id="IPR036890">
    <property type="entry name" value="HATPase_C_sf"/>
</dbReference>
<dbReference type="InterPro" id="IPR019805">
    <property type="entry name" value="Heat_shock_protein_90_CS"/>
</dbReference>
<dbReference type="InterPro" id="IPR037196">
    <property type="entry name" value="HSP90_C"/>
</dbReference>
<dbReference type="InterPro" id="IPR001404">
    <property type="entry name" value="Hsp90_fam"/>
</dbReference>
<dbReference type="InterPro" id="IPR020575">
    <property type="entry name" value="Hsp90_N"/>
</dbReference>
<dbReference type="InterPro" id="IPR020568">
    <property type="entry name" value="Ribosomal_Su5_D2-typ_SF"/>
</dbReference>
<dbReference type="NCBIfam" id="NF003555">
    <property type="entry name" value="PRK05218.1"/>
    <property type="match status" value="1"/>
</dbReference>
<dbReference type="PANTHER" id="PTHR11528">
    <property type="entry name" value="HEAT SHOCK PROTEIN 90 FAMILY MEMBER"/>
    <property type="match status" value="1"/>
</dbReference>
<dbReference type="Pfam" id="PF13589">
    <property type="entry name" value="HATPase_c_3"/>
    <property type="match status" value="1"/>
</dbReference>
<dbReference type="Pfam" id="PF00183">
    <property type="entry name" value="HSP90"/>
    <property type="match status" value="1"/>
</dbReference>
<dbReference type="PIRSF" id="PIRSF002583">
    <property type="entry name" value="Hsp90"/>
    <property type="match status" value="1"/>
</dbReference>
<dbReference type="PRINTS" id="PR00775">
    <property type="entry name" value="HEATSHOCK90"/>
</dbReference>
<dbReference type="SUPFAM" id="SSF55874">
    <property type="entry name" value="ATPase domain of HSP90 chaperone/DNA topoisomerase II/histidine kinase"/>
    <property type="match status" value="1"/>
</dbReference>
<dbReference type="SUPFAM" id="SSF110942">
    <property type="entry name" value="HSP90 C-terminal domain"/>
    <property type="match status" value="1"/>
</dbReference>
<dbReference type="SUPFAM" id="SSF54211">
    <property type="entry name" value="Ribosomal protein S5 domain 2-like"/>
    <property type="match status" value="1"/>
</dbReference>
<dbReference type="PROSITE" id="PS00298">
    <property type="entry name" value="HSP90"/>
    <property type="match status" value="1"/>
</dbReference>
<sequence>MSKEHGAAAEKHEFRTEVRKLLHIITHSLYTNREIFLRELVSNASDALDKLRFAQTRGEAAPAADLDLNIAITVNEETRTLTVSDTGIGMTRQELIDNLGTIASSGSERFLKELAEKGEQASNIIGRFGVGFYAVFMVADSVTVTTRSALDASGAWRWTSDGLGSFELEEALDAPERGTRIDIRLKEDAGDFLKKDHLKDVIRRHSNFIPFPVSVEGEHVNTTPALWREPRFQVTEEQYKDFYTFLTFDTQAPMDTIHLSIDAPVQFTSLAFIPNFGNELFGYDRDKYGLDLYVRRVLISKEYKALIPEYLSFLKGVVDTEDLPLNISRETLQENALIAKIRQTLVKQVLAHLAKLAESDAEKYATFWRTHGRVFRMGYNDYINRDKFIPLLRFNSSALDDEKGLCSLDDYIGRAREGQKTVWYVSAPNREAARLNPHVEIFRRKGIEVLYLYEAADEFIMESLGKWNEFEFRSAEHADADALKDFDDVEKKDAPEALDEEGRKTLSSLLSHMKTLLGDKVEDVRESARLSDSPACLASKDGGMTASMEKLMRVMNKDESVPRKVLEINPDHPLTRNLLRLYRADADDRLLAQATEQLYESALLLEGYLRDPHALVGRVNSLLEQATGWYAEVRKL</sequence>
<keyword id="KW-0067">ATP-binding</keyword>
<keyword id="KW-0143">Chaperone</keyword>
<keyword id="KW-0963">Cytoplasm</keyword>
<keyword id="KW-0547">Nucleotide-binding</keyword>
<keyword id="KW-1185">Reference proteome</keyword>
<keyword id="KW-0346">Stress response</keyword>
<proteinExistence type="inferred from homology"/>
<name>HTPG_OLEA2</name>
<accession>Q313E8</accession>
<organism>
    <name type="scientific">Oleidesulfovibrio alaskensis (strain ATCC BAA-1058 / DSM 17464 / G20)</name>
    <name type="common">Desulfovibrio alaskensis</name>
    <dbReference type="NCBI Taxonomy" id="207559"/>
    <lineage>
        <taxon>Bacteria</taxon>
        <taxon>Pseudomonadati</taxon>
        <taxon>Thermodesulfobacteriota</taxon>
        <taxon>Desulfovibrionia</taxon>
        <taxon>Desulfovibrionales</taxon>
        <taxon>Desulfovibrionaceae</taxon>
        <taxon>Oleidesulfovibrio</taxon>
    </lineage>
</organism>
<protein>
    <recommendedName>
        <fullName evidence="1">Chaperone protein HtpG</fullName>
    </recommendedName>
    <alternativeName>
        <fullName evidence="1">Heat shock protein HtpG</fullName>
    </alternativeName>
    <alternativeName>
        <fullName evidence="1">High temperature protein G</fullName>
    </alternativeName>
</protein>
<gene>
    <name evidence="1" type="primary">htpG</name>
    <name type="ordered locus">Dde_1147</name>
</gene>
<reference key="1">
    <citation type="journal article" date="2011" name="J. Bacteriol.">
        <title>Complete genome sequence and updated annotation of Desulfovibrio alaskensis G20.</title>
        <authorList>
            <person name="Hauser L.J."/>
            <person name="Land M.L."/>
            <person name="Brown S.D."/>
            <person name="Larimer F."/>
            <person name="Keller K.L."/>
            <person name="Rapp-Giles B.J."/>
            <person name="Price M.N."/>
            <person name="Lin M."/>
            <person name="Bruce D.C."/>
            <person name="Detter J.C."/>
            <person name="Tapia R."/>
            <person name="Han C.S."/>
            <person name="Goodwin L.A."/>
            <person name="Cheng J.F."/>
            <person name="Pitluck S."/>
            <person name="Copeland A."/>
            <person name="Lucas S."/>
            <person name="Nolan M."/>
            <person name="Lapidus A.L."/>
            <person name="Palumbo A.V."/>
            <person name="Wall J.D."/>
        </authorList>
    </citation>
    <scope>NUCLEOTIDE SEQUENCE [LARGE SCALE GENOMIC DNA]</scope>
    <source>
        <strain>ATCC BAA-1058 / DSM 17464 / G20</strain>
    </source>
</reference>
<evidence type="ECO:0000255" key="1">
    <source>
        <dbReference type="HAMAP-Rule" id="MF_00505"/>
    </source>
</evidence>